<keyword id="KW-0210">Decarboxylase</keyword>
<keyword id="KW-0456">Lyase</keyword>
<keyword id="KW-0665">Pyrimidine biosynthesis</keyword>
<evidence type="ECO:0000255" key="1">
    <source>
        <dbReference type="HAMAP-Rule" id="MF_01200"/>
    </source>
</evidence>
<comment type="function">
    <text evidence="1">Catalyzes the decarboxylation of orotidine 5'-monophosphate (OMP) to uridine 5'-monophosphate (UMP).</text>
</comment>
<comment type="catalytic activity">
    <reaction evidence="1">
        <text>orotidine 5'-phosphate + H(+) = UMP + CO2</text>
        <dbReference type="Rhea" id="RHEA:11596"/>
        <dbReference type="ChEBI" id="CHEBI:15378"/>
        <dbReference type="ChEBI" id="CHEBI:16526"/>
        <dbReference type="ChEBI" id="CHEBI:57538"/>
        <dbReference type="ChEBI" id="CHEBI:57865"/>
        <dbReference type="EC" id="4.1.1.23"/>
    </reaction>
</comment>
<comment type="pathway">
    <text evidence="1">Pyrimidine metabolism; UMP biosynthesis via de novo pathway; UMP from orotate: step 2/2.</text>
</comment>
<comment type="subunit">
    <text evidence="1">Homodimer.</text>
</comment>
<comment type="similarity">
    <text evidence="1">Belongs to the OMP decarboxylase family. Type 1 subfamily.</text>
</comment>
<protein>
    <recommendedName>
        <fullName evidence="1">Orotidine 5'-phosphate decarboxylase</fullName>
        <ecNumber evidence="1">4.1.1.23</ecNumber>
    </recommendedName>
    <alternativeName>
        <fullName evidence="1">OMP decarboxylase</fullName>
        <shortName evidence="1">OMPDCase</shortName>
        <shortName evidence="1">OMPdecase</shortName>
    </alternativeName>
</protein>
<accession>Q6A911</accession>
<sequence length="236" mass="24333">MDITRPIIALDLPSAEAALDFVGRFDGENLFVKVGMELFYAAGPSVVTSLKEAGHDVFCDLKLHDIPNTVKGAASSLSRLGADLLTVHAAGGRSMMEASLEGLGDAAETTRVIAITQLTSTSPEALKTEQLVDVPLVESVRNYAKLAQAAGLAGVVCSAHEAADIASVTGPNFLRVTPGIRPAGSAVGDQSRVATPGNAASMGSSAIVVGRPITKADDPVAAYHAIRDDWNAGRKA</sequence>
<feature type="chain" id="PRO_0000241887" description="Orotidine 5'-phosphate decarboxylase">
    <location>
        <begin position="1"/>
        <end position="236"/>
    </location>
</feature>
<feature type="active site" description="Proton donor" evidence="1">
    <location>
        <position position="62"/>
    </location>
</feature>
<feature type="binding site" evidence="1">
    <location>
        <position position="11"/>
    </location>
    <ligand>
        <name>substrate</name>
    </ligand>
</feature>
<feature type="binding site" evidence="1">
    <location>
        <position position="33"/>
    </location>
    <ligand>
        <name>substrate</name>
    </ligand>
</feature>
<feature type="binding site" evidence="1">
    <location>
        <begin position="60"/>
        <end position="69"/>
    </location>
    <ligand>
        <name>substrate</name>
    </ligand>
</feature>
<feature type="binding site" evidence="1">
    <location>
        <position position="119"/>
    </location>
    <ligand>
        <name>substrate</name>
    </ligand>
</feature>
<feature type="binding site" evidence="1">
    <location>
        <position position="181"/>
    </location>
    <ligand>
        <name>substrate</name>
    </ligand>
</feature>
<feature type="binding site" evidence="1">
    <location>
        <position position="190"/>
    </location>
    <ligand>
        <name>substrate</name>
    </ligand>
</feature>
<feature type="binding site" evidence="1">
    <location>
        <position position="210"/>
    </location>
    <ligand>
        <name>substrate</name>
    </ligand>
</feature>
<feature type="binding site" evidence="1">
    <location>
        <position position="211"/>
    </location>
    <ligand>
        <name>substrate</name>
    </ligand>
</feature>
<gene>
    <name evidence="1" type="primary">pyrF</name>
    <name type="ordered locus">PPA1003</name>
</gene>
<proteinExistence type="inferred from homology"/>
<organism>
    <name type="scientific">Cutibacterium acnes (strain DSM 16379 / KPA171202)</name>
    <name type="common">Propionibacterium acnes</name>
    <dbReference type="NCBI Taxonomy" id="267747"/>
    <lineage>
        <taxon>Bacteria</taxon>
        <taxon>Bacillati</taxon>
        <taxon>Actinomycetota</taxon>
        <taxon>Actinomycetes</taxon>
        <taxon>Propionibacteriales</taxon>
        <taxon>Propionibacteriaceae</taxon>
        <taxon>Cutibacterium</taxon>
    </lineage>
</organism>
<name>PYRF_CUTAK</name>
<reference key="1">
    <citation type="journal article" date="2004" name="Science">
        <title>The complete genome sequence of Propionibacterium acnes, a commensal of human skin.</title>
        <authorList>
            <person name="Brueggemann H."/>
            <person name="Henne A."/>
            <person name="Hoster F."/>
            <person name="Liesegang H."/>
            <person name="Wiezer A."/>
            <person name="Strittmatter A."/>
            <person name="Hujer S."/>
            <person name="Duerre P."/>
            <person name="Gottschalk G."/>
        </authorList>
    </citation>
    <scope>NUCLEOTIDE SEQUENCE [LARGE SCALE GENOMIC DNA]</scope>
    <source>
        <strain>DSM 16379 / KPA171202</strain>
    </source>
</reference>
<dbReference type="EC" id="4.1.1.23" evidence="1"/>
<dbReference type="EMBL" id="AE017283">
    <property type="protein sequence ID" value="AAT82755.1"/>
    <property type="molecule type" value="Genomic_DNA"/>
</dbReference>
<dbReference type="RefSeq" id="WP_002524998.1">
    <property type="nucleotide sequence ID" value="NZ_CP025935.1"/>
</dbReference>
<dbReference type="SMR" id="Q6A911"/>
<dbReference type="EnsemblBacteria" id="AAT82755">
    <property type="protein sequence ID" value="AAT82755"/>
    <property type="gene ID" value="PPA1003"/>
</dbReference>
<dbReference type="KEGG" id="pac:PPA1003"/>
<dbReference type="PATRIC" id="fig|267747.3.peg.1038"/>
<dbReference type="eggNOG" id="COG0284">
    <property type="taxonomic scope" value="Bacteria"/>
</dbReference>
<dbReference type="HOGENOM" id="CLU_067069_1_1_11"/>
<dbReference type="UniPathway" id="UPA00070">
    <property type="reaction ID" value="UER00120"/>
</dbReference>
<dbReference type="Proteomes" id="UP000000603">
    <property type="component" value="Chromosome"/>
</dbReference>
<dbReference type="GO" id="GO:0005829">
    <property type="term" value="C:cytosol"/>
    <property type="evidence" value="ECO:0007669"/>
    <property type="project" value="TreeGrafter"/>
</dbReference>
<dbReference type="GO" id="GO:0004590">
    <property type="term" value="F:orotidine-5'-phosphate decarboxylase activity"/>
    <property type="evidence" value="ECO:0007669"/>
    <property type="project" value="UniProtKB-UniRule"/>
</dbReference>
<dbReference type="GO" id="GO:0006207">
    <property type="term" value="P:'de novo' pyrimidine nucleobase biosynthetic process"/>
    <property type="evidence" value="ECO:0007669"/>
    <property type="project" value="InterPro"/>
</dbReference>
<dbReference type="GO" id="GO:0044205">
    <property type="term" value="P:'de novo' UMP biosynthetic process"/>
    <property type="evidence" value="ECO:0007669"/>
    <property type="project" value="UniProtKB-UniRule"/>
</dbReference>
<dbReference type="CDD" id="cd04725">
    <property type="entry name" value="OMP_decarboxylase_like"/>
    <property type="match status" value="1"/>
</dbReference>
<dbReference type="FunFam" id="3.20.20.70:FF:000015">
    <property type="entry name" value="Orotidine 5'-phosphate decarboxylase"/>
    <property type="match status" value="1"/>
</dbReference>
<dbReference type="Gene3D" id="3.20.20.70">
    <property type="entry name" value="Aldolase class I"/>
    <property type="match status" value="1"/>
</dbReference>
<dbReference type="HAMAP" id="MF_01200_B">
    <property type="entry name" value="OMPdecase_type1_B"/>
    <property type="match status" value="1"/>
</dbReference>
<dbReference type="InterPro" id="IPR013785">
    <property type="entry name" value="Aldolase_TIM"/>
</dbReference>
<dbReference type="InterPro" id="IPR014732">
    <property type="entry name" value="OMPdecase"/>
</dbReference>
<dbReference type="InterPro" id="IPR018089">
    <property type="entry name" value="OMPdecase_AS"/>
</dbReference>
<dbReference type="InterPro" id="IPR047596">
    <property type="entry name" value="OMPdecase_bac"/>
</dbReference>
<dbReference type="InterPro" id="IPR001754">
    <property type="entry name" value="OMPdeCOase_dom"/>
</dbReference>
<dbReference type="InterPro" id="IPR011060">
    <property type="entry name" value="RibuloseP-bd_barrel"/>
</dbReference>
<dbReference type="NCBIfam" id="NF001273">
    <property type="entry name" value="PRK00230.1"/>
    <property type="match status" value="1"/>
</dbReference>
<dbReference type="NCBIfam" id="TIGR01740">
    <property type="entry name" value="pyrF"/>
    <property type="match status" value="1"/>
</dbReference>
<dbReference type="PANTHER" id="PTHR32119">
    <property type="entry name" value="OROTIDINE 5'-PHOSPHATE DECARBOXYLASE"/>
    <property type="match status" value="1"/>
</dbReference>
<dbReference type="PANTHER" id="PTHR32119:SF2">
    <property type="entry name" value="OROTIDINE 5'-PHOSPHATE DECARBOXYLASE"/>
    <property type="match status" value="1"/>
</dbReference>
<dbReference type="Pfam" id="PF00215">
    <property type="entry name" value="OMPdecase"/>
    <property type="match status" value="1"/>
</dbReference>
<dbReference type="SMART" id="SM00934">
    <property type="entry name" value="OMPdecase"/>
    <property type="match status" value="1"/>
</dbReference>
<dbReference type="SUPFAM" id="SSF51366">
    <property type="entry name" value="Ribulose-phoshate binding barrel"/>
    <property type="match status" value="1"/>
</dbReference>
<dbReference type="PROSITE" id="PS00156">
    <property type="entry name" value="OMPDECASE"/>
    <property type="match status" value="1"/>
</dbReference>